<geneLocation type="non-photosynthetic plastid"/>
<keyword id="KW-0934">Plastid</keyword>
<keyword id="KW-0687">Ribonucleoprotein</keyword>
<keyword id="KW-0689">Ribosomal protein</keyword>
<dbReference type="EMBL" id="AJ294725">
    <property type="protein sequence ID" value="CAC24596.1"/>
    <property type="molecule type" value="Genomic_DNA"/>
</dbReference>
<dbReference type="PIR" id="S38607">
    <property type="entry name" value="S38607"/>
</dbReference>
<dbReference type="RefSeq" id="NP_074985.1">
    <property type="nucleotide sequence ID" value="NC_002652.1"/>
</dbReference>
<dbReference type="SMR" id="P34768"/>
<dbReference type="GeneID" id="802499"/>
<dbReference type="GO" id="GO:0005762">
    <property type="term" value="C:mitochondrial large ribosomal subunit"/>
    <property type="evidence" value="ECO:0007669"/>
    <property type="project" value="TreeGrafter"/>
</dbReference>
<dbReference type="GO" id="GO:0009536">
    <property type="term" value="C:plastid"/>
    <property type="evidence" value="ECO:0007669"/>
    <property type="project" value="UniProtKB-SubCell"/>
</dbReference>
<dbReference type="GO" id="GO:0003723">
    <property type="term" value="F:RNA binding"/>
    <property type="evidence" value="ECO:0007669"/>
    <property type="project" value="InterPro"/>
</dbReference>
<dbReference type="GO" id="GO:0003735">
    <property type="term" value="F:structural constituent of ribosome"/>
    <property type="evidence" value="ECO:0007669"/>
    <property type="project" value="InterPro"/>
</dbReference>
<dbReference type="GO" id="GO:0016740">
    <property type="term" value="F:transferase activity"/>
    <property type="evidence" value="ECO:0007669"/>
    <property type="project" value="InterPro"/>
</dbReference>
<dbReference type="GO" id="GO:0032543">
    <property type="term" value="P:mitochondrial translation"/>
    <property type="evidence" value="ECO:0007669"/>
    <property type="project" value="TreeGrafter"/>
</dbReference>
<dbReference type="FunFam" id="2.30.30.30:FF:000001">
    <property type="entry name" value="50S ribosomal protein L2"/>
    <property type="match status" value="1"/>
</dbReference>
<dbReference type="FunFam" id="4.10.950.10:FF:000001">
    <property type="entry name" value="50S ribosomal protein L2"/>
    <property type="match status" value="1"/>
</dbReference>
<dbReference type="Gene3D" id="2.30.30.30">
    <property type="match status" value="1"/>
</dbReference>
<dbReference type="Gene3D" id="2.40.50.140">
    <property type="entry name" value="Nucleic acid-binding proteins"/>
    <property type="match status" value="1"/>
</dbReference>
<dbReference type="Gene3D" id="4.10.950.10">
    <property type="entry name" value="Ribosomal protein L2, domain 3"/>
    <property type="match status" value="1"/>
</dbReference>
<dbReference type="HAMAP" id="MF_01320_B">
    <property type="entry name" value="Ribosomal_uL2_B"/>
    <property type="match status" value="1"/>
</dbReference>
<dbReference type="InterPro" id="IPR012340">
    <property type="entry name" value="NA-bd_OB-fold"/>
</dbReference>
<dbReference type="InterPro" id="IPR014722">
    <property type="entry name" value="Rib_uL2_dom2"/>
</dbReference>
<dbReference type="InterPro" id="IPR002171">
    <property type="entry name" value="Ribosomal_uL2"/>
</dbReference>
<dbReference type="InterPro" id="IPR005880">
    <property type="entry name" value="Ribosomal_uL2_bac/org-type"/>
</dbReference>
<dbReference type="InterPro" id="IPR022669">
    <property type="entry name" value="Ribosomal_uL2_C"/>
</dbReference>
<dbReference type="InterPro" id="IPR022671">
    <property type="entry name" value="Ribosomal_uL2_CS"/>
</dbReference>
<dbReference type="InterPro" id="IPR014726">
    <property type="entry name" value="Ribosomal_uL2_dom3"/>
</dbReference>
<dbReference type="InterPro" id="IPR022666">
    <property type="entry name" value="Ribosomal_uL2_RNA-bd_dom"/>
</dbReference>
<dbReference type="InterPro" id="IPR008991">
    <property type="entry name" value="Translation_prot_SH3-like_sf"/>
</dbReference>
<dbReference type="NCBIfam" id="TIGR01171">
    <property type="entry name" value="rplB_bact"/>
    <property type="match status" value="1"/>
</dbReference>
<dbReference type="PANTHER" id="PTHR13691:SF5">
    <property type="entry name" value="LARGE RIBOSOMAL SUBUNIT PROTEIN UL2M"/>
    <property type="match status" value="1"/>
</dbReference>
<dbReference type="PANTHER" id="PTHR13691">
    <property type="entry name" value="RIBOSOMAL PROTEIN L2"/>
    <property type="match status" value="1"/>
</dbReference>
<dbReference type="Pfam" id="PF00181">
    <property type="entry name" value="Ribosomal_L2"/>
    <property type="match status" value="1"/>
</dbReference>
<dbReference type="Pfam" id="PF03947">
    <property type="entry name" value="Ribosomal_L2_C"/>
    <property type="match status" value="1"/>
</dbReference>
<dbReference type="PIRSF" id="PIRSF002158">
    <property type="entry name" value="Ribosomal_L2"/>
    <property type="match status" value="1"/>
</dbReference>
<dbReference type="SMART" id="SM01383">
    <property type="entry name" value="Ribosomal_L2"/>
    <property type="match status" value="1"/>
</dbReference>
<dbReference type="SMART" id="SM01382">
    <property type="entry name" value="Ribosomal_L2_C"/>
    <property type="match status" value="1"/>
</dbReference>
<dbReference type="SUPFAM" id="SSF50249">
    <property type="entry name" value="Nucleic acid-binding proteins"/>
    <property type="match status" value="1"/>
</dbReference>
<dbReference type="SUPFAM" id="SSF50104">
    <property type="entry name" value="Translation proteins SH3-like domain"/>
    <property type="match status" value="1"/>
</dbReference>
<dbReference type="PROSITE" id="PS00467">
    <property type="entry name" value="RIBOSOMAL_L2"/>
    <property type="match status" value="1"/>
</dbReference>
<evidence type="ECO:0000250" key="1"/>
<evidence type="ECO:0000255" key="2">
    <source>
        <dbReference type="HAMAP-Rule" id="MF_01320"/>
    </source>
</evidence>
<evidence type="ECO:0000256" key="3">
    <source>
        <dbReference type="SAM" id="MobiDB-lite"/>
    </source>
</evidence>
<evidence type="ECO:0000305" key="4"/>
<reference key="1">
    <citation type="journal article" date="1994" name="Plant Physiol.">
        <title>Plastid ribosomal protein genes from the nonphotosynthetic flagellate Astasia longa.</title>
        <authorList>
            <person name="Gockel G."/>
            <person name="Baier S."/>
            <person name="Hachtel W."/>
        </authorList>
    </citation>
    <scope>NUCLEOTIDE SEQUENCE [GENOMIC DNA]</scope>
    <source>
        <strain>CCAP 1204-17a</strain>
    </source>
</reference>
<reference key="2">
    <citation type="journal article" date="2000" name="Protist">
        <title>Complete gene map of the plastid genome of the nonphotosynthetic euglenoid flagellate Astasia longa.</title>
        <authorList>
            <person name="Gockel G."/>
            <person name="Hachtel W."/>
        </authorList>
    </citation>
    <scope>NUCLEOTIDE SEQUENCE [LARGE SCALE GENOMIC DNA]</scope>
    <source>
        <strain>CCAP 1204-17a</strain>
    </source>
</reference>
<feature type="chain" id="PRO_0000129665" description="Large ribosomal subunit protein uL2c">
    <location>
        <begin position="1"/>
        <end position="274"/>
    </location>
</feature>
<feature type="region of interest" description="Disordered" evidence="3">
    <location>
        <begin position="230"/>
        <end position="252"/>
    </location>
</feature>
<comment type="subunit">
    <text evidence="1">Part of the 50S ribosomal subunit.</text>
</comment>
<comment type="subcellular location">
    <subcellularLocation>
        <location>Plastid</location>
    </subcellularLocation>
</comment>
<comment type="similarity">
    <text evidence="4">Belongs to the universal ribosomal protein uL2 family.</text>
</comment>
<name>RK2_EUGLO</name>
<protein>
    <recommendedName>
        <fullName evidence="2">Large ribosomal subunit protein uL2c</fullName>
    </recommendedName>
    <alternativeName>
        <fullName evidence="4">50S ribosomal protein L2, plastid</fullName>
    </alternativeName>
</protein>
<organism>
    <name type="scientific">Euglena longa</name>
    <name type="common">Euglenophycean alga</name>
    <name type="synonym">Astasia longa</name>
    <dbReference type="NCBI Taxonomy" id="3037"/>
    <lineage>
        <taxon>Eukaryota</taxon>
        <taxon>Discoba</taxon>
        <taxon>Euglenozoa</taxon>
        <taxon>Euglenida</taxon>
        <taxon>Spirocuta</taxon>
        <taxon>Euglenophyceae</taxon>
        <taxon>Euglenales</taxon>
        <taxon>Euglenaceae</taxon>
        <taxon>Euglena</taxon>
    </lineage>
</organism>
<gene>
    <name type="primary">rpl2</name>
</gene>
<proteinExistence type="inferred from homology"/>
<sequence>MVVRIYNPCTPGTRHRSVNDFSGVANSKYRKNLSFFLHRSKGRNNRGVITNRNLGGGHKRLFRKIEFKRDKFSIFGKVLSIEYDPNRSSRIALVIYSDGIKRYIIQPLNLVIGNKIISDFHTTIDIGNALPVNFIPLGTLVHNVEFKPGNGGKIARAAGAFSKIIAKDKNFVSLSMPSGETRLIENSCWATIGQVGNLDFYNVILGKAGRNRWLGNNPSVRGIAMNPCDHPHGGGEGRSPIGRSKPLTPWGKIALGKRTRKPKRYSNKYILSRK</sequence>
<accession>P34768</accession>